<accession>P45995</accession>
<organism>
    <name type="scientific">Haemophilus influenzae</name>
    <dbReference type="NCBI Taxonomy" id="727"/>
    <lineage>
        <taxon>Bacteria</taxon>
        <taxon>Pseudomonadati</taxon>
        <taxon>Pseudomonadota</taxon>
        <taxon>Gammaproteobacteria</taxon>
        <taxon>Pasteurellales</taxon>
        <taxon>Pasteurellaceae</taxon>
        <taxon>Haemophilus</taxon>
    </lineage>
</organism>
<reference key="1">
    <citation type="submission" date="1995-01" db="EMBL/GenBank/DDBJ databases">
        <authorList>
            <person name="Green B.A."/>
            <person name="Olmsted S.B."/>
        </authorList>
    </citation>
    <scope>NUCLEOTIDE SEQUENCE [GENOMIC DNA]</scope>
    <source>
        <strain>86-0295 / LKP serotype 1</strain>
    </source>
</reference>
<keyword id="KW-0281">Fimbrium</keyword>
<keyword id="KW-0732">Signal</keyword>
<proteinExistence type="inferred from homology"/>
<name>HIFE2_HAEIF</name>
<protein>
    <recommendedName>
        <fullName>Minor fimbrial subunit HifE</fullName>
    </recommendedName>
</protein>
<comment type="function">
    <text>May be a minor structural protein required for pilus biogenesis. May be the adhesive component in the pili.</text>
</comment>
<comment type="subcellular location">
    <subcellularLocation>
        <location evidence="2">Fimbrium</location>
    </subcellularLocation>
</comment>
<comment type="similarity">
    <text evidence="2">Belongs to the fimbrial protein family.</text>
</comment>
<gene>
    <name type="primary">hifE</name>
</gene>
<evidence type="ECO:0000255" key="1"/>
<evidence type="ECO:0000305" key="2"/>
<dbReference type="EMBL" id="U19730">
    <property type="protein sequence ID" value="AAA61818.1"/>
    <property type="molecule type" value="Genomic_DNA"/>
</dbReference>
<dbReference type="GO" id="GO:0009289">
    <property type="term" value="C:pilus"/>
    <property type="evidence" value="ECO:0007669"/>
    <property type="project" value="UniProtKB-SubCell"/>
</dbReference>
<dbReference type="GO" id="GO:0043709">
    <property type="term" value="P:cell adhesion involved in single-species biofilm formation"/>
    <property type="evidence" value="ECO:0007669"/>
    <property type="project" value="TreeGrafter"/>
</dbReference>
<dbReference type="Gene3D" id="2.60.40.1090">
    <property type="entry name" value="Fimbrial-type adhesion domain"/>
    <property type="match status" value="1"/>
</dbReference>
<dbReference type="InterPro" id="IPR000259">
    <property type="entry name" value="Adhesion_dom_fimbrial"/>
</dbReference>
<dbReference type="InterPro" id="IPR036937">
    <property type="entry name" value="Adhesion_dom_fimbrial_sf"/>
</dbReference>
<dbReference type="InterPro" id="IPR008966">
    <property type="entry name" value="Adhesion_dom_sf"/>
</dbReference>
<dbReference type="InterPro" id="IPR050263">
    <property type="entry name" value="Bact_Fimbrial_Adh_Pro"/>
</dbReference>
<dbReference type="PANTHER" id="PTHR33420:SF3">
    <property type="entry name" value="FIMBRIAL SUBUNIT ELFA"/>
    <property type="match status" value="1"/>
</dbReference>
<dbReference type="PANTHER" id="PTHR33420">
    <property type="entry name" value="FIMBRIAL SUBUNIT ELFA-RELATED"/>
    <property type="match status" value="1"/>
</dbReference>
<dbReference type="Pfam" id="PF00419">
    <property type="entry name" value="Fimbrial"/>
    <property type="match status" value="1"/>
</dbReference>
<dbReference type="SUPFAM" id="SSF49401">
    <property type="entry name" value="Bacterial adhesins"/>
    <property type="match status" value="1"/>
</dbReference>
<sequence>MNKKSYINHYLTLFKVTTLLFTLSSNPVWANIKTVQGTTSGFPLLTRTFTFNGNLQWNVSALQPAYIVSSQARDNLDTVHIQSSEINAPTNSLAPFNNWINTKSAVELGYSFAGITCTSNPCPTMKLPLLFHPDLTNLTPPGKKNSDGGEIFKLHNESNLGVSFQIGVKTNTSLDWVNAKNNFSSLKVLMVPFNSSDKISLHLRAKFHLLTDFSSLNNDITIDPMNTSIGKINLETWRGSTGNFSVKYVGEDKGDISIFFNTPKIILKKQQRRCTLNNAPVSPNPVKLRAVKKRELEAQSEMEGGTFQLRVNCDNTTYNKANGKWLFPVVKVTFTDEDGTTNNGTNDLLRTQTGSGQATGVSLRIKRENGTETVKYGADSAQMGNAGQFELRKQPSPAGGDQYAEETFKVYYVKDSTRGTLIEGKVKAAATFTMSYQ</sequence>
<feature type="signal peptide" evidence="1">
    <location>
        <begin position="1"/>
        <end position="30"/>
    </location>
</feature>
<feature type="chain" id="PRO_0000009224" description="Minor fimbrial subunit HifE">
    <location>
        <begin position="31"/>
        <end position="437"/>
    </location>
</feature>